<accession>O06851</accession>
<accession>Q9L1G3</accession>
<organism>
    <name type="scientific">Streptomyces coelicolor (strain ATCC BAA-471 / A3(2) / M145)</name>
    <dbReference type="NCBI Taxonomy" id="100226"/>
    <lineage>
        <taxon>Bacteria</taxon>
        <taxon>Bacillati</taxon>
        <taxon>Actinomycetota</taxon>
        <taxon>Actinomycetes</taxon>
        <taxon>Kitasatosporales</taxon>
        <taxon>Streptomycetaceae</taxon>
        <taxon>Streptomyces</taxon>
        <taxon>Streptomyces albidoflavus group</taxon>
    </lineage>
</organism>
<proteinExistence type="inferred from homology"/>
<reference key="1">
    <citation type="journal article" date="2002" name="Nature">
        <title>Complete genome sequence of the model actinomycete Streptomyces coelicolor A3(2).</title>
        <authorList>
            <person name="Bentley S.D."/>
            <person name="Chater K.F."/>
            <person name="Cerdeno-Tarraga A.-M."/>
            <person name="Challis G.L."/>
            <person name="Thomson N.R."/>
            <person name="James K.D."/>
            <person name="Harris D.E."/>
            <person name="Quail M.A."/>
            <person name="Kieser H."/>
            <person name="Harper D."/>
            <person name="Bateman A."/>
            <person name="Brown S."/>
            <person name="Chandra G."/>
            <person name="Chen C.W."/>
            <person name="Collins M."/>
            <person name="Cronin A."/>
            <person name="Fraser A."/>
            <person name="Goble A."/>
            <person name="Hidalgo J."/>
            <person name="Hornsby T."/>
            <person name="Howarth S."/>
            <person name="Huang C.-H."/>
            <person name="Kieser T."/>
            <person name="Larke L."/>
            <person name="Murphy L.D."/>
            <person name="Oliver K."/>
            <person name="O'Neil S."/>
            <person name="Rabbinowitsch E."/>
            <person name="Rajandream M.A."/>
            <person name="Rutherford K.M."/>
            <person name="Rutter S."/>
            <person name="Seeger K."/>
            <person name="Saunders D."/>
            <person name="Sharp S."/>
            <person name="Squares R."/>
            <person name="Squares S."/>
            <person name="Taylor K."/>
            <person name="Warren T."/>
            <person name="Wietzorrek A."/>
            <person name="Woodward J.R."/>
            <person name="Barrell B.G."/>
            <person name="Parkhill J."/>
            <person name="Hopwood D.A."/>
        </authorList>
    </citation>
    <scope>NUCLEOTIDE SEQUENCE [LARGE SCALE GENOMIC DNA]</scope>
    <source>
        <strain>ATCC BAA-471 / A3(2) / M145</strain>
    </source>
</reference>
<reference key="2">
    <citation type="journal article" date="1998" name="FEMS Microbiol. Lett.">
        <title>Analysis of a Streptomyces coelicolor A3(2) locus containing the nucleoside diphosphate kinase (ndk) and folylpolyglutamate synthetase (folC) genes.</title>
        <authorList>
            <person name="Burger A."/>
            <person name="Brandt B."/>
            <person name="Suesstrunk U."/>
            <person name="Thompson C.J."/>
            <person name="Wohlleben W."/>
        </authorList>
    </citation>
    <scope>NUCLEOTIDE SEQUENCE [GENOMIC DNA] OF 616-873</scope>
    <source>
        <strain>ATCC BAA-471 / A3(2) / M145</strain>
    </source>
</reference>
<sequence>MTENSQQPQPAPSTELPTQYTPAEVEGQLYERWVERGYFEADAKSDKPPYTVVIPPPNVTGSLHLGHAFEHTLIDALTRRKRMQGYETLWQPGMDHAGIATQNVVERELGKEGKSRHDLGREAFVERVWQWKSESGGQISGQMRRLGDAVAWSRERFTMDEGLSQAVQTIFKRLYDDELIYRAERIINWCPRCLTAISDIEVEYQDDDGELVSMKYGEGDETIVVATTRAETMLGDTAVAVHPEDERYKHLVGKLIKLPLTDRSIPVVADEHVDPEFGTGAVKVTPAHDPNDFEIGQRHGLPAIAVMDEHAVITAHGPFQGQDRLEARSAIVAALRAEGRIVAEKRPYVHSVGHCSRCKTTIEPRLSMQWWVKVGPLAKAAGDAVRDGKVKIHPQEMEKRYFDWVDNLHDWCISRQLWWGHRIPVWYGPEGEVVCVGPGEEPPSGEGWYQDSDVLDTWFSSGLWPFSTLGWPEQTESLAKFYPNSVLVTGYDILFFWVARMMMFGLYAMDGTPPFHTIALHGMVRDQNGKKMSKSFGNVVNPLDWMDKYGSDALRFTLARGANPGVDVPIGEDWVQGSRNFANKIWNATRFALMNGATVEGPLPDASRMSSTDRWILSRLNSVVAEVDAYYEDYQFAKLSDALFHFAWDEVFDWYVELSKTTFQAGGEAAEVSKRVLGEVLDVTLRLLHPVVPFVTETLWTTLTGGESVVIAEWPTDSGFRDAGAEREIETVQSVITEVRRFRADQGLQPGQRVPARLTLAGSALAAHEAAVRQLLRLQPEGDAFTATATLPVAGVEVALDLSGVIDFAAERKRLAKDLAAAEKEKAQANAKLGNEAFLAKAPDQVVDKIRGRLAKADEDITRITAQLEKLPEA</sequence>
<evidence type="ECO:0000255" key="1">
    <source>
        <dbReference type="HAMAP-Rule" id="MF_02004"/>
    </source>
</evidence>
<evidence type="ECO:0000256" key="2">
    <source>
        <dbReference type="SAM" id="MobiDB-lite"/>
    </source>
</evidence>
<evidence type="ECO:0000305" key="3"/>
<gene>
    <name evidence="1" type="primary">valS</name>
    <name type="ordered locus">SCO2615</name>
    <name type="ORF">SCC88.26c</name>
</gene>
<comment type="function">
    <text evidence="1">Catalyzes the attachment of valine to tRNA(Val). As ValRS can inadvertently accommodate and process structurally similar amino acids such as threonine, to avoid such errors, it has a 'posttransfer' editing activity that hydrolyzes mischarged Thr-tRNA(Val) in a tRNA-dependent manner.</text>
</comment>
<comment type="catalytic activity">
    <reaction evidence="1">
        <text>tRNA(Val) + L-valine + ATP = L-valyl-tRNA(Val) + AMP + diphosphate</text>
        <dbReference type="Rhea" id="RHEA:10704"/>
        <dbReference type="Rhea" id="RHEA-COMP:9672"/>
        <dbReference type="Rhea" id="RHEA-COMP:9708"/>
        <dbReference type="ChEBI" id="CHEBI:30616"/>
        <dbReference type="ChEBI" id="CHEBI:33019"/>
        <dbReference type="ChEBI" id="CHEBI:57762"/>
        <dbReference type="ChEBI" id="CHEBI:78442"/>
        <dbReference type="ChEBI" id="CHEBI:78537"/>
        <dbReference type="ChEBI" id="CHEBI:456215"/>
        <dbReference type="EC" id="6.1.1.9"/>
    </reaction>
</comment>
<comment type="subunit">
    <text evidence="1">Monomer.</text>
</comment>
<comment type="subcellular location">
    <subcellularLocation>
        <location evidence="1">Cytoplasm</location>
    </subcellularLocation>
</comment>
<comment type="domain">
    <text evidence="1">ValRS has two distinct active sites: one for aminoacylation and one for editing. The misactivated threonine is translocated from the active site to the editing site.</text>
</comment>
<comment type="domain">
    <text evidence="1">The C-terminal coiled-coil domain is crucial for aminoacylation activity.</text>
</comment>
<comment type="similarity">
    <text evidence="1">Belongs to the class-I aminoacyl-tRNA synthetase family. ValS type 1 subfamily.</text>
</comment>
<feature type="chain" id="PRO_0000106236" description="Valine--tRNA ligase">
    <location>
        <begin position="1"/>
        <end position="874"/>
    </location>
</feature>
<feature type="region of interest" description="Disordered" evidence="2">
    <location>
        <begin position="1"/>
        <end position="22"/>
    </location>
</feature>
<feature type="coiled-coil region" evidence="1">
    <location>
        <begin position="805"/>
        <end position="871"/>
    </location>
</feature>
<feature type="short sequence motif" description="'HIGH' region">
    <location>
        <begin position="57"/>
        <end position="67"/>
    </location>
</feature>
<feature type="short sequence motif" description="'KMSKS' region">
    <location>
        <begin position="531"/>
        <end position="535"/>
    </location>
</feature>
<feature type="binding site" evidence="1">
    <location>
        <position position="534"/>
    </location>
    <ligand>
        <name>ATP</name>
        <dbReference type="ChEBI" id="CHEBI:30616"/>
    </ligand>
</feature>
<feature type="sequence conflict" description="In Ref. 1; CAA73510." evidence="3" ref="1">
    <original>KL</original>
    <variation>NV</variation>
    <location>
        <begin position="638"/>
        <end position="639"/>
    </location>
</feature>
<name>SYV_STRCO</name>
<dbReference type="EC" id="6.1.1.9" evidence="1"/>
<dbReference type="EMBL" id="AL939113">
    <property type="protein sequence ID" value="CAB75396.1"/>
    <property type="molecule type" value="Genomic_DNA"/>
</dbReference>
<dbReference type="EMBL" id="Y13070">
    <property type="protein sequence ID" value="CAA73510.1"/>
    <property type="molecule type" value="Genomic_DNA"/>
</dbReference>
<dbReference type="RefSeq" id="NP_626852.1">
    <property type="nucleotide sequence ID" value="NC_003888.3"/>
</dbReference>
<dbReference type="RefSeq" id="WP_011028455.1">
    <property type="nucleotide sequence ID" value="NZ_VNID01000001.1"/>
</dbReference>
<dbReference type="SMR" id="O06851"/>
<dbReference type="FunCoup" id="O06851">
    <property type="interactions" value="452"/>
</dbReference>
<dbReference type="STRING" id="100226.gene:17760219"/>
<dbReference type="PaxDb" id="100226-SCO2615"/>
<dbReference type="KEGG" id="sco:SCO2615"/>
<dbReference type="PATRIC" id="fig|100226.15.peg.2661"/>
<dbReference type="eggNOG" id="COG0525">
    <property type="taxonomic scope" value="Bacteria"/>
</dbReference>
<dbReference type="HOGENOM" id="CLU_001493_0_2_11"/>
<dbReference type="InParanoid" id="O06851"/>
<dbReference type="OrthoDB" id="9810365at2"/>
<dbReference type="PhylomeDB" id="O06851"/>
<dbReference type="Proteomes" id="UP000001973">
    <property type="component" value="Chromosome"/>
</dbReference>
<dbReference type="GO" id="GO:0005829">
    <property type="term" value="C:cytosol"/>
    <property type="evidence" value="ECO:0000318"/>
    <property type="project" value="GO_Central"/>
</dbReference>
<dbReference type="GO" id="GO:0002161">
    <property type="term" value="F:aminoacyl-tRNA deacylase activity"/>
    <property type="evidence" value="ECO:0007669"/>
    <property type="project" value="InterPro"/>
</dbReference>
<dbReference type="GO" id="GO:0005524">
    <property type="term" value="F:ATP binding"/>
    <property type="evidence" value="ECO:0007669"/>
    <property type="project" value="UniProtKB-UniRule"/>
</dbReference>
<dbReference type="GO" id="GO:0004832">
    <property type="term" value="F:valine-tRNA ligase activity"/>
    <property type="evidence" value="ECO:0000318"/>
    <property type="project" value="GO_Central"/>
</dbReference>
<dbReference type="GO" id="GO:0006438">
    <property type="term" value="P:valyl-tRNA aminoacylation"/>
    <property type="evidence" value="ECO:0000318"/>
    <property type="project" value="GO_Central"/>
</dbReference>
<dbReference type="CDD" id="cd07962">
    <property type="entry name" value="Anticodon_Ia_Val"/>
    <property type="match status" value="1"/>
</dbReference>
<dbReference type="CDD" id="cd00817">
    <property type="entry name" value="ValRS_core"/>
    <property type="match status" value="1"/>
</dbReference>
<dbReference type="FunFam" id="1.10.287.380:FF:000001">
    <property type="entry name" value="Valine--tRNA ligase"/>
    <property type="match status" value="1"/>
</dbReference>
<dbReference type="FunFam" id="1.10.730.10:FF:000027">
    <property type="entry name" value="Valine--tRNA ligase"/>
    <property type="match status" value="1"/>
</dbReference>
<dbReference type="FunFam" id="3.40.50.620:FF:000098">
    <property type="entry name" value="Valine--tRNA ligase"/>
    <property type="match status" value="1"/>
</dbReference>
<dbReference type="FunFam" id="3.40.50.620:FF:000129">
    <property type="entry name" value="Valine--tRNA ligase"/>
    <property type="match status" value="1"/>
</dbReference>
<dbReference type="FunFam" id="3.90.740.10:FF:000005">
    <property type="entry name" value="Valine--tRNA ligase, mitochondrial"/>
    <property type="match status" value="1"/>
</dbReference>
<dbReference type="Gene3D" id="3.40.50.620">
    <property type="entry name" value="HUPs"/>
    <property type="match status" value="2"/>
</dbReference>
<dbReference type="Gene3D" id="1.10.730.10">
    <property type="entry name" value="Isoleucyl-tRNA Synthetase, Domain 1"/>
    <property type="match status" value="1"/>
</dbReference>
<dbReference type="Gene3D" id="1.10.287.380">
    <property type="entry name" value="Valyl-tRNA synthetase, C-terminal domain"/>
    <property type="match status" value="1"/>
</dbReference>
<dbReference type="Gene3D" id="3.90.740.10">
    <property type="entry name" value="Valyl/Leucyl/Isoleucyl-tRNA synthetase, editing domain"/>
    <property type="match status" value="1"/>
</dbReference>
<dbReference type="HAMAP" id="MF_02004">
    <property type="entry name" value="Val_tRNA_synth_type1"/>
    <property type="match status" value="1"/>
</dbReference>
<dbReference type="InterPro" id="IPR001412">
    <property type="entry name" value="aa-tRNA-synth_I_CS"/>
</dbReference>
<dbReference type="InterPro" id="IPR002300">
    <property type="entry name" value="aa-tRNA-synth_Ia"/>
</dbReference>
<dbReference type="InterPro" id="IPR033705">
    <property type="entry name" value="Anticodon_Ia_Val"/>
</dbReference>
<dbReference type="InterPro" id="IPR013155">
    <property type="entry name" value="M/V/L/I-tRNA-synth_anticd-bd"/>
</dbReference>
<dbReference type="InterPro" id="IPR014729">
    <property type="entry name" value="Rossmann-like_a/b/a_fold"/>
</dbReference>
<dbReference type="InterPro" id="IPR010978">
    <property type="entry name" value="tRNA-bd_arm"/>
</dbReference>
<dbReference type="InterPro" id="IPR009080">
    <property type="entry name" value="tRNAsynth_Ia_anticodon-bd"/>
</dbReference>
<dbReference type="InterPro" id="IPR037118">
    <property type="entry name" value="Val-tRNA_synth_C_sf"/>
</dbReference>
<dbReference type="InterPro" id="IPR019499">
    <property type="entry name" value="Val-tRNA_synth_tRNA-bd"/>
</dbReference>
<dbReference type="InterPro" id="IPR009008">
    <property type="entry name" value="Val/Leu/Ile-tRNA-synth_edit"/>
</dbReference>
<dbReference type="InterPro" id="IPR002303">
    <property type="entry name" value="Valyl-tRNA_ligase"/>
</dbReference>
<dbReference type="NCBIfam" id="NF004349">
    <property type="entry name" value="PRK05729.1"/>
    <property type="match status" value="1"/>
</dbReference>
<dbReference type="NCBIfam" id="TIGR00422">
    <property type="entry name" value="valS"/>
    <property type="match status" value="1"/>
</dbReference>
<dbReference type="PANTHER" id="PTHR11946:SF93">
    <property type="entry name" value="VALINE--TRNA LIGASE, CHLOROPLASTIC_MITOCHONDRIAL 2"/>
    <property type="match status" value="1"/>
</dbReference>
<dbReference type="PANTHER" id="PTHR11946">
    <property type="entry name" value="VALYL-TRNA SYNTHETASES"/>
    <property type="match status" value="1"/>
</dbReference>
<dbReference type="Pfam" id="PF08264">
    <property type="entry name" value="Anticodon_1"/>
    <property type="match status" value="1"/>
</dbReference>
<dbReference type="Pfam" id="PF00133">
    <property type="entry name" value="tRNA-synt_1"/>
    <property type="match status" value="2"/>
</dbReference>
<dbReference type="Pfam" id="PF10458">
    <property type="entry name" value="Val_tRNA-synt_C"/>
    <property type="match status" value="1"/>
</dbReference>
<dbReference type="PRINTS" id="PR00986">
    <property type="entry name" value="TRNASYNTHVAL"/>
</dbReference>
<dbReference type="SUPFAM" id="SSF47323">
    <property type="entry name" value="Anticodon-binding domain of a subclass of class I aminoacyl-tRNA synthetases"/>
    <property type="match status" value="1"/>
</dbReference>
<dbReference type="SUPFAM" id="SSF52374">
    <property type="entry name" value="Nucleotidylyl transferase"/>
    <property type="match status" value="1"/>
</dbReference>
<dbReference type="SUPFAM" id="SSF46589">
    <property type="entry name" value="tRNA-binding arm"/>
    <property type="match status" value="1"/>
</dbReference>
<dbReference type="SUPFAM" id="SSF50677">
    <property type="entry name" value="ValRS/IleRS/LeuRS editing domain"/>
    <property type="match status" value="1"/>
</dbReference>
<dbReference type="PROSITE" id="PS00178">
    <property type="entry name" value="AA_TRNA_LIGASE_I"/>
    <property type="match status" value="1"/>
</dbReference>
<protein>
    <recommendedName>
        <fullName evidence="1">Valine--tRNA ligase</fullName>
        <ecNumber evidence="1">6.1.1.9</ecNumber>
    </recommendedName>
    <alternativeName>
        <fullName evidence="1">Valyl-tRNA synthetase</fullName>
        <shortName evidence="1">ValRS</shortName>
    </alternativeName>
</protein>
<keyword id="KW-0030">Aminoacyl-tRNA synthetase</keyword>
<keyword id="KW-0067">ATP-binding</keyword>
<keyword id="KW-0175">Coiled coil</keyword>
<keyword id="KW-0963">Cytoplasm</keyword>
<keyword id="KW-0436">Ligase</keyword>
<keyword id="KW-0547">Nucleotide-binding</keyword>
<keyword id="KW-0648">Protein biosynthesis</keyword>
<keyword id="KW-1185">Reference proteome</keyword>